<feature type="chain" id="PRO_0000287500" description="TBC1 domain family member 23">
    <location>
        <begin position="1"/>
        <end position="679"/>
    </location>
</feature>
<feature type="domain" description="Rab-GAP TBC" evidence="4">
    <location>
        <begin position="38"/>
        <end position="219"/>
    </location>
</feature>
<feature type="domain" description="Rhodanese" evidence="5">
    <location>
        <begin position="327"/>
        <end position="439"/>
    </location>
</feature>
<feature type="region of interest" description="Disordered" evidence="6">
    <location>
        <begin position="454"/>
        <end position="478"/>
    </location>
</feature>
<feature type="compositionally biased region" description="Low complexity" evidence="6">
    <location>
        <begin position="454"/>
        <end position="468"/>
    </location>
</feature>
<dbReference type="EMBL" id="AJ851485">
    <property type="protein sequence ID" value="CAH65119.1"/>
    <property type="molecule type" value="mRNA"/>
</dbReference>
<dbReference type="RefSeq" id="NP_001025955.1">
    <property type="nucleotide sequence ID" value="NM_001030784.1"/>
</dbReference>
<dbReference type="SMR" id="Q5F415"/>
<dbReference type="FunCoup" id="Q5F415">
    <property type="interactions" value="2644"/>
</dbReference>
<dbReference type="STRING" id="9031.ENSGALP00000024604"/>
<dbReference type="PaxDb" id="9031-ENSGALP00000024604"/>
<dbReference type="GeneID" id="418383"/>
<dbReference type="KEGG" id="gga:418383"/>
<dbReference type="CTD" id="55773"/>
<dbReference type="VEuPathDB" id="HostDB:geneid_418383"/>
<dbReference type="eggNOG" id="KOG3636">
    <property type="taxonomic scope" value="Eukaryota"/>
</dbReference>
<dbReference type="InParanoid" id="Q5F415"/>
<dbReference type="OrthoDB" id="73307at2759"/>
<dbReference type="PhylomeDB" id="Q5F415"/>
<dbReference type="PRO" id="PR:Q5F415"/>
<dbReference type="Proteomes" id="UP000000539">
    <property type="component" value="Unassembled WGS sequence"/>
</dbReference>
<dbReference type="GO" id="GO:0005829">
    <property type="term" value="C:cytosol"/>
    <property type="evidence" value="ECO:0007669"/>
    <property type="project" value="GOC"/>
</dbReference>
<dbReference type="GO" id="GO:0005802">
    <property type="term" value="C:trans-Golgi network"/>
    <property type="evidence" value="ECO:0000318"/>
    <property type="project" value="GO_Central"/>
</dbReference>
<dbReference type="GO" id="GO:1990403">
    <property type="term" value="P:embryonic brain development"/>
    <property type="evidence" value="ECO:0000250"/>
    <property type="project" value="UniProtKB"/>
</dbReference>
<dbReference type="GO" id="GO:0042147">
    <property type="term" value="P:retrograde transport, endosome to Golgi"/>
    <property type="evidence" value="ECO:0000318"/>
    <property type="project" value="GO_Central"/>
</dbReference>
<dbReference type="GO" id="GO:0099041">
    <property type="term" value="P:vesicle tethering to Golgi"/>
    <property type="evidence" value="ECO:0000318"/>
    <property type="project" value="GO_Central"/>
</dbReference>
<dbReference type="CDD" id="cd20788">
    <property type="entry name" value="TBC1D23_C-like"/>
    <property type="match status" value="1"/>
</dbReference>
<dbReference type="FunFam" id="1.10.472.80:FF:000017">
    <property type="entry name" value="TBC1 domain family member 23"/>
    <property type="match status" value="1"/>
</dbReference>
<dbReference type="FunFam" id="3.40.250.10:FF:000002">
    <property type="entry name" value="TBC1 domain family member 23"/>
    <property type="match status" value="1"/>
</dbReference>
<dbReference type="Gene3D" id="3.40.250.10">
    <property type="entry name" value="Rhodanese-like domain"/>
    <property type="match status" value="1"/>
</dbReference>
<dbReference type="Gene3D" id="1.10.472.80">
    <property type="entry name" value="Ypt/Rab-GAP domain of gyp1p, domain 3"/>
    <property type="match status" value="1"/>
</dbReference>
<dbReference type="InterPro" id="IPR000195">
    <property type="entry name" value="Rab-GAP-TBC_dom"/>
</dbReference>
<dbReference type="InterPro" id="IPR035969">
    <property type="entry name" value="Rab-GAP_TBC_sf"/>
</dbReference>
<dbReference type="InterPro" id="IPR001763">
    <property type="entry name" value="Rhodanese-like_dom"/>
</dbReference>
<dbReference type="InterPro" id="IPR036873">
    <property type="entry name" value="Rhodanese-like_dom_sf"/>
</dbReference>
<dbReference type="InterPro" id="IPR039755">
    <property type="entry name" value="TBC1D23"/>
</dbReference>
<dbReference type="InterPro" id="IPR045799">
    <property type="entry name" value="TBC1D23_C"/>
</dbReference>
<dbReference type="PANTHER" id="PTHR13297:SF5">
    <property type="entry name" value="TBC1 DOMAIN FAMILY MEMBER 23"/>
    <property type="match status" value="1"/>
</dbReference>
<dbReference type="PANTHER" id="PTHR13297">
    <property type="entry name" value="TBC1 DOMAIN FAMILY MEMBER 23-RELATED"/>
    <property type="match status" value="1"/>
</dbReference>
<dbReference type="Pfam" id="PF00566">
    <property type="entry name" value="RabGAP-TBC"/>
    <property type="match status" value="1"/>
</dbReference>
<dbReference type="Pfam" id="PF00581">
    <property type="entry name" value="Rhodanese"/>
    <property type="match status" value="1"/>
</dbReference>
<dbReference type="Pfam" id="PF19430">
    <property type="entry name" value="TBC1D23_C"/>
    <property type="match status" value="1"/>
</dbReference>
<dbReference type="SMART" id="SM00164">
    <property type="entry name" value="TBC"/>
    <property type="match status" value="1"/>
</dbReference>
<dbReference type="SUPFAM" id="SSF52821">
    <property type="entry name" value="Rhodanese/Cell cycle control phosphatase"/>
    <property type="match status" value="1"/>
</dbReference>
<dbReference type="SUPFAM" id="SSF47923">
    <property type="entry name" value="Ypt/Rab-GAP domain of gyp1p"/>
    <property type="match status" value="2"/>
</dbReference>
<dbReference type="PROSITE" id="PS50206">
    <property type="entry name" value="RHODANESE_3"/>
    <property type="match status" value="1"/>
</dbReference>
<dbReference type="PROSITE" id="PS50086">
    <property type="entry name" value="TBC_RABGAP"/>
    <property type="match status" value="1"/>
</dbReference>
<organism>
    <name type="scientific">Gallus gallus</name>
    <name type="common">Chicken</name>
    <dbReference type="NCBI Taxonomy" id="9031"/>
    <lineage>
        <taxon>Eukaryota</taxon>
        <taxon>Metazoa</taxon>
        <taxon>Chordata</taxon>
        <taxon>Craniata</taxon>
        <taxon>Vertebrata</taxon>
        <taxon>Euteleostomi</taxon>
        <taxon>Archelosauria</taxon>
        <taxon>Archosauria</taxon>
        <taxon>Dinosauria</taxon>
        <taxon>Saurischia</taxon>
        <taxon>Theropoda</taxon>
        <taxon>Coelurosauria</taxon>
        <taxon>Aves</taxon>
        <taxon>Neognathae</taxon>
        <taxon>Galloanserae</taxon>
        <taxon>Galliformes</taxon>
        <taxon>Phasianidae</taxon>
        <taxon>Phasianinae</taxon>
        <taxon>Gallus</taxon>
    </lineage>
</organism>
<protein>
    <recommendedName>
        <fullName>TBC1 domain family member 23</fullName>
    </recommendedName>
</protein>
<proteinExistence type="evidence at transcript level"/>
<name>TBC23_CHICK</name>
<sequence length="679" mass="76011">MAEGDGAPPSSWEKDLAEALEEGGCDLETVRNIIQGRQLPADLRAKVWKIALNVVGKGDSLASWDGCLDLPEQSIIHKDCQELIDRLSVPEDEKSVLLLDIESVITFYCKSRNVKYSSCLGWIHLLRPLVHLRLPRSDLYNCFYAIMNKYIPRDCFLKGRPFHLFRLLLQYHEPELCSFLDTKKMTPDSYALNWLGSLFSYYCSTEVTQAIWDGYLQQADPFFIYFLMLIILVNAKDVILAQESEKEEMLKFLETSPANLEVEDIEDLFSLAQYYCSKTPASFRKDNHSLFGSSLLGLKDDDTDLSQALCLAVSVSEILQANQQQGEGVRFFVVDCRPAEQYNAGHLSTAFHLDSDLMLQNPSEFAQSVKSLLEAQKQSIESGSIAGGEHLCFMGSGREEEDMYMNMVLAHFLQKNKEYVSIARGGFMALQQHLADINVEGPENGYGHWIASTSGSRSSINSSVDGDSPNGSSDGKGVKSLVNKMTVALKTKSVNVKEKVISFIENTSTPVDRHVSSSDRVGKPYRGVKPVFSIGDEEEYDTDGIDSSSMSDDDRKEVVNIQTWINKPDVKYNFPCNEVKENGHMFPSHLLVTATNMYCLREIPSRKGLAYIQSRQALNSVVKITSKKKHPELITFKYGNSNTSGIEILAVERYLIPNAGDATKAIKQQIMKVLDALES</sequence>
<evidence type="ECO:0000250" key="1">
    <source>
        <dbReference type="UniProtKB" id="Q7SXV1"/>
    </source>
</evidence>
<evidence type="ECO:0000250" key="2">
    <source>
        <dbReference type="UniProtKB" id="Q8K0F1"/>
    </source>
</evidence>
<evidence type="ECO:0000250" key="3">
    <source>
        <dbReference type="UniProtKB" id="Q9NUY8"/>
    </source>
</evidence>
<evidence type="ECO:0000255" key="4">
    <source>
        <dbReference type="PROSITE-ProRule" id="PRU00163"/>
    </source>
</evidence>
<evidence type="ECO:0000255" key="5">
    <source>
        <dbReference type="PROSITE-ProRule" id="PRU00173"/>
    </source>
</evidence>
<evidence type="ECO:0000256" key="6">
    <source>
        <dbReference type="SAM" id="MobiDB-lite"/>
    </source>
</evidence>
<gene>
    <name type="primary">TBC1D23</name>
    <name type="ORF">RCJMB04_3n7</name>
</gene>
<reference key="1">
    <citation type="journal article" date="2005" name="Genome Biol.">
        <title>Full-length cDNAs from chicken bursal lymphocytes to facilitate gene function analysis.</title>
        <authorList>
            <person name="Caldwell R.B."/>
            <person name="Kierzek A.M."/>
            <person name="Arakawa H."/>
            <person name="Bezzubov Y."/>
            <person name="Zaim J."/>
            <person name="Fiedler P."/>
            <person name="Kutter S."/>
            <person name="Blagodatski A."/>
            <person name="Kostovska D."/>
            <person name="Koter M."/>
            <person name="Plachy J."/>
            <person name="Carninci P."/>
            <person name="Hayashizaki Y."/>
            <person name="Buerstedde J.-M."/>
        </authorList>
    </citation>
    <scope>NUCLEOTIDE SEQUENCE [LARGE SCALE MRNA]</scope>
    <source>
        <strain>CB</strain>
        <tissue>Bursa of Fabricius</tissue>
    </source>
</reference>
<accession>Q5F415</accession>
<keyword id="KW-0217">Developmental protein</keyword>
<keyword id="KW-0333">Golgi apparatus</keyword>
<keyword id="KW-1185">Reference proteome</keyword>
<comment type="function">
    <text evidence="1 2 3">Putative Rab GTPase-activating protein which plays a role in vesicular trafficking. Involved in endosome-to-Golgi trafficking. Acts as a bridging protein by binding simultaneously to golgins, located at the trans-Golgi, and to the WASH complex, located on endosome-derived vesicles (By similarity). Plays a role in brain development (By similarity). May act as a general inhibitor of innate immunity signaling (By similarity).</text>
</comment>
<comment type="subcellular location">
    <subcellularLocation>
        <location evidence="3">Golgi apparatus</location>
        <location evidence="3">trans-Golgi network</location>
    </subcellularLocation>
</comment>